<keyword id="KW-0131">Cell cycle</keyword>
<keyword id="KW-0132">Cell division</keyword>
<keyword id="KW-0997">Cell inner membrane</keyword>
<keyword id="KW-1003">Cell membrane</keyword>
<keyword id="KW-0133">Cell shape</keyword>
<keyword id="KW-0961">Cell wall biogenesis/degradation</keyword>
<keyword id="KW-0328">Glycosyltransferase</keyword>
<keyword id="KW-0472">Membrane</keyword>
<keyword id="KW-0573">Peptidoglycan synthesis</keyword>
<keyword id="KW-1185">Reference proteome</keyword>
<keyword id="KW-0808">Transferase</keyword>
<accession>A5G8K0</accession>
<protein>
    <recommendedName>
        <fullName evidence="1">UDP-N-acetylglucosamine--N-acetylmuramyl-(pentapeptide) pyrophosphoryl-undecaprenol N-acetylglucosamine transferase</fullName>
        <ecNumber evidence="1">2.4.1.227</ecNumber>
    </recommendedName>
    <alternativeName>
        <fullName evidence="1">Undecaprenyl-PP-MurNAc-pentapeptide-UDPGlcNAc GlcNAc transferase</fullName>
    </alternativeName>
</protein>
<organism>
    <name type="scientific">Geotalea uraniireducens (strain Rf4)</name>
    <name type="common">Geobacter uraniireducens</name>
    <dbReference type="NCBI Taxonomy" id="351605"/>
    <lineage>
        <taxon>Bacteria</taxon>
        <taxon>Pseudomonadati</taxon>
        <taxon>Thermodesulfobacteriota</taxon>
        <taxon>Desulfuromonadia</taxon>
        <taxon>Geobacterales</taxon>
        <taxon>Geobacteraceae</taxon>
        <taxon>Geotalea</taxon>
    </lineage>
</organism>
<sequence length="365" mass="39883">MKLLIAGGGTGGHLFPGIAVAEEFLARNHSNEVLFVGTERGIEARLLPRLGYRLECITASGIKGQSPLAKIRSAAQLLYGYAQSRRILKEFRPDLVLGVGGYASAPVVLAARGMQIRRFIHEQNAIPGLTNKLLARFAEKVFISIEESRKFFPEDATILTGNPLRKEILWNVPLGQKTPASDEKLKLLVFGGSAGAHRINTAMIESLPFLAGVKERLIITHQTGEKDQAEVRKTYEQSGFAAEVTPFIDDMAAAYSNADMIVCRAGATTIAEVTACGKACIFIPYPYAADDHQRRNAEALLKKEAGYMILERELSGESLAFQVMELIAHPGKIEQTGRNARSLAQLDAAQVIVDEMTREQACTEK</sequence>
<proteinExistence type="inferred from homology"/>
<name>MURG_GEOUR</name>
<feature type="chain" id="PRO_1000074460" description="UDP-N-acetylglucosamine--N-acetylmuramyl-(pentapeptide) pyrophosphoryl-undecaprenol N-acetylglucosamine transferase">
    <location>
        <begin position="1"/>
        <end position="365"/>
    </location>
</feature>
<feature type="binding site" evidence="1">
    <location>
        <begin position="10"/>
        <end position="12"/>
    </location>
    <ligand>
        <name>UDP-N-acetyl-alpha-D-glucosamine</name>
        <dbReference type="ChEBI" id="CHEBI:57705"/>
    </ligand>
</feature>
<feature type="binding site" evidence="1">
    <location>
        <position position="124"/>
    </location>
    <ligand>
        <name>UDP-N-acetyl-alpha-D-glucosamine</name>
        <dbReference type="ChEBI" id="CHEBI:57705"/>
    </ligand>
</feature>
<feature type="binding site" evidence="1">
    <location>
        <position position="165"/>
    </location>
    <ligand>
        <name>UDP-N-acetyl-alpha-D-glucosamine</name>
        <dbReference type="ChEBI" id="CHEBI:57705"/>
    </ligand>
</feature>
<feature type="binding site" evidence="1">
    <location>
        <position position="193"/>
    </location>
    <ligand>
        <name>UDP-N-acetyl-alpha-D-glucosamine</name>
        <dbReference type="ChEBI" id="CHEBI:57705"/>
    </ligand>
</feature>
<feature type="binding site" evidence="1">
    <location>
        <position position="248"/>
    </location>
    <ligand>
        <name>UDP-N-acetyl-alpha-D-glucosamine</name>
        <dbReference type="ChEBI" id="CHEBI:57705"/>
    </ligand>
</feature>
<feature type="binding site" evidence="1">
    <location>
        <position position="293"/>
    </location>
    <ligand>
        <name>UDP-N-acetyl-alpha-D-glucosamine</name>
        <dbReference type="ChEBI" id="CHEBI:57705"/>
    </ligand>
</feature>
<comment type="function">
    <text evidence="1">Cell wall formation. Catalyzes the transfer of a GlcNAc subunit on undecaprenyl-pyrophosphoryl-MurNAc-pentapeptide (lipid intermediate I) to form undecaprenyl-pyrophosphoryl-MurNAc-(pentapeptide)GlcNAc (lipid intermediate II).</text>
</comment>
<comment type="catalytic activity">
    <reaction evidence="1">
        <text>di-trans,octa-cis-undecaprenyl diphospho-N-acetyl-alpha-D-muramoyl-L-alanyl-D-glutamyl-meso-2,6-diaminopimeloyl-D-alanyl-D-alanine + UDP-N-acetyl-alpha-D-glucosamine = di-trans,octa-cis-undecaprenyl diphospho-[N-acetyl-alpha-D-glucosaminyl-(1-&gt;4)]-N-acetyl-alpha-D-muramoyl-L-alanyl-D-glutamyl-meso-2,6-diaminopimeloyl-D-alanyl-D-alanine + UDP + H(+)</text>
        <dbReference type="Rhea" id="RHEA:31227"/>
        <dbReference type="ChEBI" id="CHEBI:15378"/>
        <dbReference type="ChEBI" id="CHEBI:57705"/>
        <dbReference type="ChEBI" id="CHEBI:58223"/>
        <dbReference type="ChEBI" id="CHEBI:61387"/>
        <dbReference type="ChEBI" id="CHEBI:61388"/>
        <dbReference type="EC" id="2.4.1.227"/>
    </reaction>
</comment>
<comment type="pathway">
    <text evidence="1">Cell wall biogenesis; peptidoglycan biosynthesis.</text>
</comment>
<comment type="subcellular location">
    <subcellularLocation>
        <location evidence="1">Cell inner membrane</location>
        <topology evidence="1">Peripheral membrane protein</topology>
        <orientation evidence="1">Cytoplasmic side</orientation>
    </subcellularLocation>
</comment>
<comment type="similarity">
    <text evidence="1">Belongs to the glycosyltransferase 28 family. MurG subfamily.</text>
</comment>
<evidence type="ECO:0000255" key="1">
    <source>
        <dbReference type="HAMAP-Rule" id="MF_00033"/>
    </source>
</evidence>
<reference key="1">
    <citation type="submission" date="2007-05" db="EMBL/GenBank/DDBJ databases">
        <title>Complete sequence of Geobacter uraniireducens Rf4.</title>
        <authorList>
            <consortium name="US DOE Joint Genome Institute"/>
            <person name="Copeland A."/>
            <person name="Lucas S."/>
            <person name="Lapidus A."/>
            <person name="Barry K."/>
            <person name="Detter J.C."/>
            <person name="Glavina del Rio T."/>
            <person name="Hammon N."/>
            <person name="Israni S."/>
            <person name="Dalin E."/>
            <person name="Tice H."/>
            <person name="Pitluck S."/>
            <person name="Chertkov O."/>
            <person name="Brettin T."/>
            <person name="Bruce D."/>
            <person name="Han C."/>
            <person name="Schmutz J."/>
            <person name="Larimer F."/>
            <person name="Land M."/>
            <person name="Hauser L."/>
            <person name="Kyrpides N."/>
            <person name="Mikhailova N."/>
            <person name="Shelobolina E."/>
            <person name="Aklujkar M."/>
            <person name="Lovley D."/>
            <person name="Richardson P."/>
        </authorList>
    </citation>
    <scope>NUCLEOTIDE SEQUENCE [LARGE SCALE GENOMIC DNA]</scope>
    <source>
        <strain>ATCC BAA-1134 / JCM 13001 / Rf4</strain>
    </source>
</reference>
<dbReference type="EC" id="2.4.1.227" evidence="1"/>
<dbReference type="EMBL" id="CP000698">
    <property type="protein sequence ID" value="ABQ28118.1"/>
    <property type="molecule type" value="Genomic_DNA"/>
</dbReference>
<dbReference type="RefSeq" id="WP_011940755.1">
    <property type="nucleotide sequence ID" value="NC_009483.1"/>
</dbReference>
<dbReference type="SMR" id="A5G8K0"/>
<dbReference type="STRING" id="351605.Gura_3974"/>
<dbReference type="CAZy" id="GT28">
    <property type="family name" value="Glycosyltransferase Family 28"/>
</dbReference>
<dbReference type="KEGG" id="gur:Gura_3974"/>
<dbReference type="HOGENOM" id="CLU_037404_0_1_7"/>
<dbReference type="OrthoDB" id="9808936at2"/>
<dbReference type="UniPathway" id="UPA00219"/>
<dbReference type="Proteomes" id="UP000006695">
    <property type="component" value="Chromosome"/>
</dbReference>
<dbReference type="GO" id="GO:0005886">
    <property type="term" value="C:plasma membrane"/>
    <property type="evidence" value="ECO:0007669"/>
    <property type="project" value="UniProtKB-SubCell"/>
</dbReference>
<dbReference type="GO" id="GO:0051991">
    <property type="term" value="F:UDP-N-acetyl-D-glucosamine:N-acetylmuramoyl-L-alanyl-D-glutamyl-meso-2,6-diaminopimelyl-D-alanyl-D-alanine-diphosphoundecaprenol 4-beta-N-acetylglucosaminlytransferase activity"/>
    <property type="evidence" value="ECO:0007669"/>
    <property type="project" value="RHEA"/>
</dbReference>
<dbReference type="GO" id="GO:0050511">
    <property type="term" value="F:undecaprenyldiphospho-muramoylpentapeptide beta-N-acetylglucosaminyltransferase activity"/>
    <property type="evidence" value="ECO:0007669"/>
    <property type="project" value="UniProtKB-UniRule"/>
</dbReference>
<dbReference type="GO" id="GO:0005975">
    <property type="term" value="P:carbohydrate metabolic process"/>
    <property type="evidence" value="ECO:0007669"/>
    <property type="project" value="InterPro"/>
</dbReference>
<dbReference type="GO" id="GO:0051301">
    <property type="term" value="P:cell division"/>
    <property type="evidence" value="ECO:0007669"/>
    <property type="project" value="UniProtKB-KW"/>
</dbReference>
<dbReference type="GO" id="GO:0071555">
    <property type="term" value="P:cell wall organization"/>
    <property type="evidence" value="ECO:0007669"/>
    <property type="project" value="UniProtKB-KW"/>
</dbReference>
<dbReference type="GO" id="GO:0030259">
    <property type="term" value="P:lipid glycosylation"/>
    <property type="evidence" value="ECO:0007669"/>
    <property type="project" value="UniProtKB-UniRule"/>
</dbReference>
<dbReference type="GO" id="GO:0009252">
    <property type="term" value="P:peptidoglycan biosynthetic process"/>
    <property type="evidence" value="ECO:0007669"/>
    <property type="project" value="UniProtKB-UniRule"/>
</dbReference>
<dbReference type="GO" id="GO:0008360">
    <property type="term" value="P:regulation of cell shape"/>
    <property type="evidence" value="ECO:0007669"/>
    <property type="project" value="UniProtKB-KW"/>
</dbReference>
<dbReference type="CDD" id="cd03785">
    <property type="entry name" value="GT28_MurG"/>
    <property type="match status" value="1"/>
</dbReference>
<dbReference type="Gene3D" id="3.40.50.2000">
    <property type="entry name" value="Glycogen Phosphorylase B"/>
    <property type="match status" value="2"/>
</dbReference>
<dbReference type="HAMAP" id="MF_00033">
    <property type="entry name" value="MurG"/>
    <property type="match status" value="1"/>
</dbReference>
<dbReference type="InterPro" id="IPR006009">
    <property type="entry name" value="GlcNAc_MurG"/>
</dbReference>
<dbReference type="InterPro" id="IPR007235">
    <property type="entry name" value="Glyco_trans_28_C"/>
</dbReference>
<dbReference type="InterPro" id="IPR004276">
    <property type="entry name" value="GlycoTrans_28_N"/>
</dbReference>
<dbReference type="NCBIfam" id="TIGR01133">
    <property type="entry name" value="murG"/>
    <property type="match status" value="1"/>
</dbReference>
<dbReference type="PANTHER" id="PTHR21015:SF22">
    <property type="entry name" value="GLYCOSYLTRANSFERASE"/>
    <property type="match status" value="1"/>
</dbReference>
<dbReference type="PANTHER" id="PTHR21015">
    <property type="entry name" value="UDP-N-ACETYLGLUCOSAMINE--N-ACETYLMURAMYL-(PENTAPEPTIDE) PYROPHOSPHORYL-UNDECAPRENOL N-ACETYLGLUCOSAMINE TRANSFERASE 1"/>
    <property type="match status" value="1"/>
</dbReference>
<dbReference type="Pfam" id="PF04101">
    <property type="entry name" value="Glyco_tran_28_C"/>
    <property type="match status" value="1"/>
</dbReference>
<dbReference type="Pfam" id="PF03033">
    <property type="entry name" value="Glyco_transf_28"/>
    <property type="match status" value="1"/>
</dbReference>
<dbReference type="SUPFAM" id="SSF53756">
    <property type="entry name" value="UDP-Glycosyltransferase/glycogen phosphorylase"/>
    <property type="match status" value="1"/>
</dbReference>
<gene>
    <name evidence="1" type="primary">murG</name>
    <name type="ordered locus">Gura_3974</name>
</gene>